<proteinExistence type="evidence at protein level"/>
<sequence length="254" mass="28078">MLLCLLYFTSSWCSGSDVPDVCTNSGMIAINFVDGPVRGVTDRILNTLDELGVKATFSFTVNQKAVGNVGQLYRRAVEEGHNVALRVDPSMDEGYQCLSQDALENNVDREIDTIDGLSGTEIRYAAVPICNGQVNSEMYNILTERGVLPVGYTFCPYDYDDPVGEFESMIEGSDPKHHSFIILMHDGQEADTSRLENMVKIGKDKGYRFVNMDECLQGYKGAPGDPELSLRGKGVESIGKGFLPFFLMMLVRLL</sequence>
<gene>
    <name type="ordered locus">ECU11_0510</name>
</gene>
<keyword id="KW-0002">3D-structure</keyword>
<keyword id="KW-1185">Reference proteome</keyword>
<feature type="chain" id="PRO_0000383036" description="Polysaccharide deacetylase domain-containing protein ECU11_0510">
    <location>
        <begin position="1"/>
        <end position="254"/>
    </location>
</feature>
<feature type="domain" description="NodB homology" evidence="1">
    <location>
        <begin position="26"/>
        <end position="210"/>
    </location>
</feature>
<feature type="strand" evidence="4">
    <location>
        <begin position="23"/>
        <end position="34"/>
    </location>
</feature>
<feature type="helix" evidence="4">
    <location>
        <begin position="40"/>
        <end position="51"/>
    </location>
</feature>
<feature type="strand" evidence="4">
    <location>
        <begin position="56"/>
        <end position="59"/>
    </location>
</feature>
<feature type="helix" evidence="4">
    <location>
        <begin position="67"/>
        <end position="70"/>
    </location>
</feature>
<feature type="helix" evidence="4">
    <location>
        <begin position="71"/>
        <end position="78"/>
    </location>
</feature>
<feature type="strand" evidence="4">
    <location>
        <begin position="82"/>
        <end position="86"/>
    </location>
</feature>
<feature type="helix" evidence="4">
    <location>
        <begin position="89"/>
        <end position="91"/>
    </location>
</feature>
<feature type="helix" evidence="4">
    <location>
        <begin position="95"/>
        <end position="97"/>
    </location>
</feature>
<feature type="helix" evidence="4">
    <location>
        <begin position="100"/>
        <end position="118"/>
    </location>
</feature>
<feature type="strand" evidence="4">
    <location>
        <begin position="124"/>
        <end position="126"/>
    </location>
</feature>
<feature type="helix" evidence="4">
    <location>
        <begin position="136"/>
        <end position="143"/>
    </location>
</feature>
<feature type="turn" evidence="4">
    <location>
        <begin position="144"/>
        <end position="146"/>
    </location>
</feature>
<feature type="helix" evidence="4">
    <location>
        <begin position="156"/>
        <end position="158"/>
    </location>
</feature>
<feature type="strand" evidence="4">
    <location>
        <begin position="159"/>
        <end position="161"/>
    </location>
</feature>
<feature type="helix" evidence="4">
    <location>
        <begin position="162"/>
        <end position="171"/>
    </location>
</feature>
<feature type="turn" evidence="4">
    <location>
        <begin position="175"/>
        <end position="177"/>
    </location>
</feature>
<feature type="strand" evidence="4">
    <location>
        <begin position="180"/>
        <end position="185"/>
    </location>
</feature>
<feature type="helix" evidence="4">
    <location>
        <begin position="186"/>
        <end position="189"/>
    </location>
</feature>
<feature type="helix" evidence="4">
    <location>
        <begin position="193"/>
        <end position="205"/>
    </location>
</feature>
<feature type="helix" evidence="4">
    <location>
        <begin position="212"/>
        <end position="215"/>
    </location>
</feature>
<feature type="turn" evidence="4">
    <location>
        <begin position="216"/>
        <end position="218"/>
    </location>
</feature>
<accession>Q8SU65</accession>
<protein>
    <recommendedName>
        <fullName>Polysaccharide deacetylase domain-containing protein ECU11_0510</fullName>
    </recommendedName>
</protein>
<evidence type="ECO:0000255" key="1">
    <source>
        <dbReference type="PROSITE-ProRule" id="PRU01014"/>
    </source>
</evidence>
<evidence type="ECO:0000269" key="2">
    <source>
    </source>
</evidence>
<evidence type="ECO:0000305" key="3">
    <source>
    </source>
</evidence>
<evidence type="ECO:0007829" key="4">
    <source>
        <dbReference type="PDB" id="2VYO"/>
    </source>
</evidence>
<comment type="developmental stage">
    <text evidence="2">Expressed in late sporogonial stages.</text>
</comment>
<comment type="caution">
    <text evidence="3">Although it contains a polysaccharide deacetylase domain, the protein does not display any chitin deacetylase activity.</text>
</comment>
<dbReference type="EMBL" id="AL590450">
    <property type="protein sequence ID" value="CAD25961.1"/>
    <property type="molecule type" value="Genomic_DNA"/>
</dbReference>
<dbReference type="RefSeq" id="NP_586357.1">
    <property type="nucleotide sequence ID" value="NM_001042190.1"/>
</dbReference>
<dbReference type="PDB" id="2VYO">
    <property type="method" value="X-ray"/>
    <property type="resolution" value="1.50 A"/>
    <property type="chains" value="A=1-254"/>
</dbReference>
<dbReference type="PDBsum" id="2VYO"/>
<dbReference type="SMR" id="Q8SU65"/>
<dbReference type="STRING" id="284813.Q8SU65"/>
<dbReference type="GeneID" id="860010"/>
<dbReference type="KEGG" id="ecu:ECU11_0510"/>
<dbReference type="VEuPathDB" id="MicrosporidiaDB:ECU11_0510"/>
<dbReference type="HOGENOM" id="CLU_1082481_0_0_1"/>
<dbReference type="InParanoid" id="Q8SU65"/>
<dbReference type="OMA" id="WNHPTEV"/>
<dbReference type="OrthoDB" id="407355at2759"/>
<dbReference type="EvolutionaryTrace" id="Q8SU65"/>
<dbReference type="Proteomes" id="UP000000819">
    <property type="component" value="Chromosome XI"/>
</dbReference>
<dbReference type="GO" id="GO:0004099">
    <property type="term" value="F:chitin deacetylase activity"/>
    <property type="evidence" value="ECO:0007669"/>
    <property type="project" value="UniProtKB-ARBA"/>
</dbReference>
<dbReference type="GO" id="GO:0005975">
    <property type="term" value="P:carbohydrate metabolic process"/>
    <property type="evidence" value="ECO:0007669"/>
    <property type="project" value="InterPro"/>
</dbReference>
<dbReference type="GO" id="GO:0009272">
    <property type="term" value="P:fungal-type cell wall biogenesis"/>
    <property type="evidence" value="ECO:0007669"/>
    <property type="project" value="UniProtKB-ARBA"/>
</dbReference>
<dbReference type="CDD" id="cd10917">
    <property type="entry name" value="CE4_NodB_like_6s_7s"/>
    <property type="match status" value="1"/>
</dbReference>
<dbReference type="Gene3D" id="3.20.20.370">
    <property type="entry name" value="Glycoside hydrolase/deacetylase"/>
    <property type="match status" value="1"/>
</dbReference>
<dbReference type="InterPro" id="IPR011330">
    <property type="entry name" value="Glyco_hydro/deAcase_b/a-brl"/>
</dbReference>
<dbReference type="InterPro" id="IPR002509">
    <property type="entry name" value="NODB_dom"/>
</dbReference>
<dbReference type="InterPro" id="IPR050248">
    <property type="entry name" value="Polysacc_deacetylase_ArnD"/>
</dbReference>
<dbReference type="PANTHER" id="PTHR10587">
    <property type="entry name" value="GLYCOSYL TRANSFERASE-RELATED"/>
    <property type="match status" value="1"/>
</dbReference>
<dbReference type="PANTHER" id="PTHR10587:SF125">
    <property type="entry name" value="POLYSACCHARIDE DEACETYLASE YHEN-RELATED"/>
    <property type="match status" value="1"/>
</dbReference>
<dbReference type="Pfam" id="PF01522">
    <property type="entry name" value="Polysacc_deac_1"/>
    <property type="match status" value="1"/>
</dbReference>
<dbReference type="SUPFAM" id="SSF88713">
    <property type="entry name" value="Glycoside hydrolase/deacetylase"/>
    <property type="match status" value="1"/>
</dbReference>
<dbReference type="PROSITE" id="PS51677">
    <property type="entry name" value="NODB"/>
    <property type="match status" value="1"/>
</dbReference>
<name>YB51_ENCCU</name>
<organism>
    <name type="scientific">Encephalitozoon cuniculi (strain GB-M1)</name>
    <name type="common">Microsporidian parasite</name>
    <dbReference type="NCBI Taxonomy" id="284813"/>
    <lineage>
        <taxon>Eukaryota</taxon>
        <taxon>Fungi</taxon>
        <taxon>Fungi incertae sedis</taxon>
        <taxon>Microsporidia</taxon>
        <taxon>Unikaryonidae</taxon>
        <taxon>Encephalitozoon</taxon>
    </lineage>
</organism>
<reference key="1">
    <citation type="journal article" date="2001" name="Nature">
        <title>Genome sequence and gene compaction of the eukaryote parasite Encephalitozoon cuniculi.</title>
        <authorList>
            <person name="Katinka M.D."/>
            <person name="Duprat S."/>
            <person name="Cornillot E."/>
            <person name="Metenier G."/>
            <person name="Thomarat F."/>
            <person name="Prensier G."/>
            <person name="Barbe V."/>
            <person name="Peyretaillade E."/>
            <person name="Brottier P."/>
            <person name="Wincker P."/>
            <person name="Delbac F."/>
            <person name="El Alaoui H."/>
            <person name="Peyret P."/>
            <person name="Saurin W."/>
            <person name="Gouy M."/>
            <person name="Weissenbach J."/>
            <person name="Vivares C.P."/>
        </authorList>
    </citation>
    <scope>NUCLEOTIDE SEQUENCE [LARGE SCALE GENOMIC DNA]</scope>
    <source>
        <strain>GB-M1</strain>
    </source>
</reference>
<reference key="2">
    <citation type="journal article" date="2006" name="Proteomics">
        <title>Proteomic analysis of the eukaryotic parasite Encephalitozoon cuniculi (microsporidia): a reference map for proteins expressed in late sporogonial stages.</title>
        <authorList>
            <person name="Brosson D."/>
            <person name="Kuhn L."/>
            <person name="Delbac F."/>
            <person name="Garin J."/>
            <person name="Vivares C.P."/>
            <person name="Texier C."/>
        </authorList>
    </citation>
    <scope>IDENTIFICATION BY MASS SPECTROMETRY [LARGE SCALE ANALYSIS]</scope>
    <scope>DEVELOPMENTAL STAGE</scope>
    <scope>SUBCELLULAR LOCATION</scope>
</reference>
<reference key="3">
    <citation type="journal article" date="2009" name="Protein Sci.">
        <title>Structural and functional characterization of a putative polysaccharide deacetylase of the human parasite Encephalitozoon cuniculi.</title>
        <authorList>
            <person name="Urch J.E."/>
            <person name="Hurtado-Guerrero R."/>
            <person name="Brosson D."/>
            <person name="Liu Z."/>
            <person name="Eijsink V.G."/>
            <person name="Texier C."/>
            <person name="van Aalten D.M."/>
        </authorList>
    </citation>
    <scope>X-RAY CRYSTALLOGRAPHY (1.5 ANGSTROMS)</scope>
</reference>